<protein>
    <recommendedName>
        <fullName>Anther-specific protein SF18</fullName>
    </recommendedName>
    <alternativeName>
        <fullName>Defensin-like protein</fullName>
    </alternativeName>
</protein>
<feature type="signal peptide">
    <location>
        <begin position="1" status="less than"/>
        <end position="8"/>
    </location>
</feature>
<feature type="chain" id="PRO_0000007040" description="Anther-specific protein SF18">
    <location>
        <begin position="9"/>
        <end position="161"/>
    </location>
</feature>
<feature type="region of interest" description="Defensin-like domain">
    <location>
        <begin position="16"/>
        <end position="65"/>
    </location>
</feature>
<feature type="region of interest" description="Disordered" evidence="2">
    <location>
        <begin position="70"/>
        <end position="161"/>
    </location>
</feature>
<feature type="compositionally biased region" description="Pro residues" evidence="2">
    <location>
        <begin position="70"/>
        <end position="88"/>
    </location>
</feature>
<feature type="compositionally biased region" description="Pro residues" evidence="2">
    <location>
        <begin position="96"/>
        <end position="105"/>
    </location>
</feature>
<feature type="compositionally biased region" description="Pro residues" evidence="2">
    <location>
        <begin position="113"/>
        <end position="125"/>
    </location>
</feature>
<feature type="compositionally biased region" description="Gly residues" evidence="2">
    <location>
        <begin position="126"/>
        <end position="155"/>
    </location>
</feature>
<feature type="disulfide bond" evidence="1">
    <location>
        <begin position="18"/>
        <end position="65"/>
    </location>
</feature>
<feature type="disulfide bond" evidence="1">
    <location>
        <begin position="29"/>
        <end position="50"/>
    </location>
</feature>
<feature type="disulfide bond" evidence="1">
    <location>
        <begin position="35"/>
        <end position="59"/>
    </location>
</feature>
<feature type="disulfide bond" evidence="1">
    <location>
        <begin position="39"/>
        <end position="61"/>
    </location>
</feature>
<feature type="non-terminal residue">
    <location>
        <position position="1"/>
    </location>
</feature>
<organism>
    <name type="scientific">Helianthus annuus</name>
    <name type="common">Common sunflower</name>
    <dbReference type="NCBI Taxonomy" id="4232"/>
    <lineage>
        <taxon>Eukaryota</taxon>
        <taxon>Viridiplantae</taxon>
        <taxon>Streptophyta</taxon>
        <taxon>Embryophyta</taxon>
        <taxon>Tracheophyta</taxon>
        <taxon>Spermatophyta</taxon>
        <taxon>Magnoliopsida</taxon>
        <taxon>eudicotyledons</taxon>
        <taxon>Gunneridae</taxon>
        <taxon>Pentapetalae</taxon>
        <taxon>asterids</taxon>
        <taxon>campanulids</taxon>
        <taxon>Asterales</taxon>
        <taxon>Asteraceae</taxon>
        <taxon>Asteroideae</taxon>
        <taxon>Heliantheae alliance</taxon>
        <taxon>Heliantheae</taxon>
        <taxon>Helianthus</taxon>
    </lineage>
</organism>
<reference key="1">
    <citation type="journal article" date="1990" name="Plant Mol. Biol.">
        <title>Nucleotide sequence of two anther-specific cDNAs from sunflower (Helianthus annuus L.).</title>
        <authorList>
            <person name="Domon C."/>
            <person name="Evrard J.-L."/>
            <person name="Herdenberger F."/>
            <person name="Pillay D.T.N."/>
            <person name="Steinmetz A."/>
        </authorList>
    </citation>
    <scope>NUCLEOTIDE SEQUENCE [MRNA]</scope>
    <source>
        <strain>cv. HA401B / Cargill</strain>
        <tissue>Anther</tissue>
    </source>
</reference>
<keyword id="KW-0134">Cell wall</keyword>
<keyword id="KW-0961">Cell wall biogenesis/degradation</keyword>
<keyword id="KW-1015">Disulfide bond</keyword>
<keyword id="KW-0964">Secreted</keyword>
<keyword id="KW-0732">Signal</keyword>
<proteinExistence type="evidence at transcript level"/>
<comment type="function">
    <text>Anther-specific cell wall protein which could contribute to the cell wall architecture of epidermal anther cells via intermolecular disulfide bridges.</text>
</comment>
<comment type="subcellular location">
    <subcellularLocation>
        <location evidence="1">Secreted</location>
        <location evidence="1">Cell wall</location>
    </subcellularLocation>
</comment>
<comment type="tissue specificity">
    <text>Epidermal anther cells.</text>
</comment>
<comment type="developmental stage">
    <text>Late developmental stages.</text>
</comment>
<comment type="similarity">
    <text evidence="3">Belongs to the DEFL family.</text>
</comment>
<dbReference type="EMBL" id="X53375">
    <property type="protein sequence ID" value="CAA37455.1"/>
    <property type="molecule type" value="mRNA"/>
</dbReference>
<dbReference type="PIR" id="S12246">
    <property type="entry name" value="S12246"/>
</dbReference>
<dbReference type="SMR" id="P22357"/>
<dbReference type="GO" id="GO:0005576">
    <property type="term" value="C:extracellular region"/>
    <property type="evidence" value="ECO:0007669"/>
    <property type="project" value="UniProtKB-KW"/>
</dbReference>
<dbReference type="GO" id="GO:0071555">
    <property type="term" value="P:cell wall organization"/>
    <property type="evidence" value="ECO:0007669"/>
    <property type="project" value="UniProtKB-KW"/>
</dbReference>
<dbReference type="GO" id="GO:0006952">
    <property type="term" value="P:defense response"/>
    <property type="evidence" value="ECO:0007669"/>
    <property type="project" value="InterPro"/>
</dbReference>
<dbReference type="Gene3D" id="3.30.30.10">
    <property type="entry name" value="Knottin, scorpion toxin-like"/>
    <property type="match status" value="1"/>
</dbReference>
<dbReference type="InterPro" id="IPR008176">
    <property type="entry name" value="Defensin_plant"/>
</dbReference>
<dbReference type="InterPro" id="IPR003614">
    <property type="entry name" value="Scorpion_toxin-like"/>
</dbReference>
<dbReference type="InterPro" id="IPR036574">
    <property type="entry name" value="Scorpion_toxin-like_sf"/>
</dbReference>
<dbReference type="PANTHER" id="PTHR33147">
    <property type="entry name" value="DEFENSIN-LIKE PROTEIN 1"/>
    <property type="match status" value="1"/>
</dbReference>
<dbReference type="PANTHER" id="PTHR33147:SF98">
    <property type="entry name" value="GAMMA-THIONIN-RELATED"/>
    <property type="match status" value="1"/>
</dbReference>
<dbReference type="Pfam" id="PF00304">
    <property type="entry name" value="Gamma-thionin"/>
    <property type="match status" value="1"/>
</dbReference>
<dbReference type="SMART" id="SM00505">
    <property type="entry name" value="Knot1"/>
    <property type="match status" value="1"/>
</dbReference>
<dbReference type="SUPFAM" id="SSF57095">
    <property type="entry name" value="Scorpion toxin-like"/>
    <property type="match status" value="1"/>
</dbReference>
<dbReference type="PROSITE" id="PS00940">
    <property type="entry name" value="GAMMA_THIONIN"/>
    <property type="match status" value="1"/>
</dbReference>
<accession>P22357</accession>
<evidence type="ECO:0000250" key="1"/>
<evidence type="ECO:0000256" key="2">
    <source>
        <dbReference type="SAM" id="MobiDB-lite"/>
    </source>
</evidence>
<evidence type="ECO:0000305" key="3"/>
<sequence length="161" mass="15363">LVFVVAISDIATVNGKICEKPSKTWFGNCKDTDKCDKRCIDWEGAKHGACHQREAKHMCFCYFDCDPQKNPGPPPGAPGTPGTPPAPPGKGEGDAPHPPPTPSPPGGDGGSGPAPPAGGGSPPPAGGDGGGGAPPPAGGDGGGGAPPPAGGDGGGAPPPGA</sequence>
<name>SF18_HELAN</name>